<reference key="1">
    <citation type="journal article" date="1987" name="EMBO J.">
        <title>Cloning and light regulation of expression of the phycocyanin operon of the cyanobacterium Anabaena.</title>
        <authorList>
            <person name="Belknap W.R."/>
            <person name="Haselkorn R."/>
        </authorList>
    </citation>
    <scope>NUCLEOTIDE SEQUENCE [GENOMIC DNA]</scope>
</reference>
<reference key="2">
    <citation type="journal article" date="2001" name="Anal. Biochem.">
        <title>Recombinant phycobiliproteins. Recombinant C-phycocyanins equipped with affinity tags, oligomerization, and biospecific recognition domains.</title>
        <authorList>
            <person name="Cai Y.A."/>
            <person name="Murphy J.T."/>
            <person name="Wedemayer G.J."/>
            <person name="Glazer A.N."/>
        </authorList>
    </citation>
    <scope>NUCLEOTIDE SEQUENCE [GENOMIC DNA]</scope>
</reference>
<reference key="3">
    <citation type="journal article" date="2001" name="DNA Res.">
        <title>Complete genomic sequence of the filamentous nitrogen-fixing cyanobacterium Anabaena sp. strain PCC 7120.</title>
        <authorList>
            <person name="Kaneko T."/>
            <person name="Nakamura Y."/>
            <person name="Wolk C.P."/>
            <person name="Kuritz T."/>
            <person name="Sasamoto S."/>
            <person name="Watanabe A."/>
            <person name="Iriguchi M."/>
            <person name="Ishikawa A."/>
            <person name="Kawashima K."/>
            <person name="Kimura T."/>
            <person name="Kishida Y."/>
            <person name="Kohara M."/>
            <person name="Matsumoto M."/>
            <person name="Matsuno A."/>
            <person name="Muraki A."/>
            <person name="Nakazaki N."/>
            <person name="Shimpo S."/>
            <person name="Sugimoto M."/>
            <person name="Takazawa M."/>
            <person name="Yamada M."/>
            <person name="Yasuda M."/>
            <person name="Tabata S."/>
        </authorList>
    </citation>
    <scope>NUCLEOTIDE SEQUENCE [LARGE SCALE GENOMIC DNA]</scope>
    <source>
        <strain>PCC 7120 / SAG 25.82 / UTEX 2576</strain>
    </source>
</reference>
<reference key="4">
    <citation type="journal article" date="1991" name="Gene">
        <title>A small multigene family encodes the rod-core linker polypeptides of Anabaena sp. PCC7120 phycobilisomes.</title>
        <authorList>
            <person name="Bryant D.A."/>
            <person name="Stirewalt V.L."/>
            <person name="Glauser M."/>
            <person name="Frank G."/>
            <person name="Sidler W."/>
            <person name="Zuber H."/>
        </authorList>
    </citation>
    <scope>PROTEIN SEQUENCE OF 2-11</scope>
    <scope>SUBUNIT</scope>
    <source>
        <strain>PCC 7120 / SAG 25.82 / UTEX 2576</strain>
    </source>
</reference>
<reference key="5">
    <citation type="journal article" date="2014" name="Proc. Natl. Acad. Sci. U.S.A.">
        <title>Attachment of phycobilisomes in an antenna-photosystem I supercomplex of cyanobacteria.</title>
        <authorList>
            <person name="Watanabe M."/>
            <person name="Semchonok D.A."/>
            <person name="Webber-Birungi M.T."/>
            <person name="Ehira S."/>
            <person name="Kondo K."/>
            <person name="Narikawa R."/>
            <person name="Ohmori M."/>
            <person name="Boekema E.J."/>
            <person name="Ikeuchi M."/>
        </authorList>
    </citation>
    <scope>PROTEIN SEQUENCE OF 2-15</scope>
    <scope>SUBUNIT</scope>
    <scope>SUBCELLULAR LOCATION</scope>
    <source>
        <strain>PCC 7120 / SAG 25.82 / UTEX 2576</strain>
    </source>
</reference>
<name>PYR1_NOSS1</name>
<gene>
    <name type="primary">cpcC</name>
    <name type="ordered locus">alr0530</name>
</gene>
<organism>
    <name type="scientific">Nostoc sp. (strain PCC 7120 / SAG 25.82 / UTEX 2576)</name>
    <dbReference type="NCBI Taxonomy" id="103690"/>
    <lineage>
        <taxon>Bacteria</taxon>
        <taxon>Bacillati</taxon>
        <taxon>Cyanobacteriota</taxon>
        <taxon>Cyanophyceae</taxon>
        <taxon>Nostocales</taxon>
        <taxon>Nostocaceae</taxon>
        <taxon>Nostoc</taxon>
    </lineage>
</organism>
<proteinExistence type="evidence at protein level"/>
<keyword id="KW-0002">3D-structure</keyword>
<keyword id="KW-0042">Antenna complex</keyword>
<keyword id="KW-0903">Direct protein sequencing</keyword>
<keyword id="KW-0472">Membrane</keyword>
<keyword id="KW-0602">Photosynthesis</keyword>
<keyword id="KW-0605">Phycobilisome</keyword>
<keyword id="KW-1185">Reference proteome</keyword>
<keyword id="KW-0793">Thylakoid</keyword>
<dbReference type="EMBL" id="X05239">
    <property type="protein sequence ID" value="CAA28864.1"/>
    <property type="molecule type" value="Genomic_DNA"/>
</dbReference>
<dbReference type="EMBL" id="AF178757">
    <property type="protein sequence ID" value="AAG09318.1"/>
    <property type="molecule type" value="Genomic_DNA"/>
</dbReference>
<dbReference type="EMBL" id="BA000019">
    <property type="protein sequence ID" value="BAB72488.1"/>
    <property type="molecule type" value="Genomic_DNA"/>
</dbReference>
<dbReference type="PIR" id="AI1872">
    <property type="entry name" value="AI1872"/>
</dbReference>
<dbReference type="PIR" id="C29674">
    <property type="entry name" value="C29674"/>
</dbReference>
<dbReference type="RefSeq" id="WP_010994706.1">
    <property type="nucleotide sequence ID" value="NZ_RSCN01000059.1"/>
</dbReference>
<dbReference type="PDB" id="7EYD">
    <property type="method" value="EM"/>
    <property type="resolution" value="3.90 A"/>
    <property type="chains" value="N1/N2/N3/N4/N5/N6/N7/NA=1-286"/>
</dbReference>
<dbReference type="PDBsum" id="7EYD"/>
<dbReference type="EMDB" id="EMD-31381"/>
<dbReference type="SMR" id="P07123"/>
<dbReference type="STRING" id="103690.gene:10492541"/>
<dbReference type="KEGG" id="ana:alr0530"/>
<dbReference type="eggNOG" id="COG0237">
    <property type="taxonomic scope" value="Bacteria"/>
</dbReference>
<dbReference type="OrthoDB" id="420396at2"/>
<dbReference type="Proteomes" id="UP000002483">
    <property type="component" value="Chromosome"/>
</dbReference>
<dbReference type="GO" id="GO:0030089">
    <property type="term" value="C:phycobilisome"/>
    <property type="evidence" value="ECO:0007669"/>
    <property type="project" value="UniProtKB-KW"/>
</dbReference>
<dbReference type="GO" id="GO:0031676">
    <property type="term" value="C:plasma membrane-derived thylakoid membrane"/>
    <property type="evidence" value="ECO:0007669"/>
    <property type="project" value="UniProtKB-SubCell"/>
</dbReference>
<dbReference type="GO" id="GO:0015979">
    <property type="term" value="P:photosynthesis"/>
    <property type="evidence" value="ECO:0007669"/>
    <property type="project" value="UniProtKB-KW"/>
</dbReference>
<dbReference type="Gene3D" id="1.10.3130.20">
    <property type="entry name" value="Phycobilisome linker domain"/>
    <property type="match status" value="1"/>
</dbReference>
<dbReference type="InterPro" id="IPR008213">
    <property type="entry name" value="CpcD-like_dom"/>
</dbReference>
<dbReference type="InterPro" id="IPR001297">
    <property type="entry name" value="PBS_linker_dom"/>
</dbReference>
<dbReference type="InterPro" id="IPR038255">
    <property type="entry name" value="PBS_linker_sf"/>
</dbReference>
<dbReference type="InterPro" id="IPR016470">
    <property type="entry name" value="Phycobilisome"/>
</dbReference>
<dbReference type="PANTHER" id="PTHR34011:SF6">
    <property type="entry name" value="PHYCOBILIPROTEIN APCE"/>
    <property type="match status" value="1"/>
</dbReference>
<dbReference type="PANTHER" id="PTHR34011">
    <property type="entry name" value="PHYCOBILISOME 32.1 KDA LINKER POLYPEPTIDE, PHYCOCYANIN-ASSOCIATED, ROD 2-RELATED"/>
    <property type="match status" value="1"/>
</dbReference>
<dbReference type="Pfam" id="PF01383">
    <property type="entry name" value="CpcD"/>
    <property type="match status" value="1"/>
</dbReference>
<dbReference type="Pfam" id="PF00427">
    <property type="entry name" value="PBS_linker_poly"/>
    <property type="match status" value="1"/>
</dbReference>
<dbReference type="PIRSF" id="PIRSF005898">
    <property type="entry name" value="Phycobilisome_CpeC/CpcI"/>
    <property type="match status" value="1"/>
</dbReference>
<dbReference type="SMART" id="SM01094">
    <property type="entry name" value="CpcD"/>
    <property type="match status" value="1"/>
</dbReference>
<dbReference type="PROSITE" id="PS51441">
    <property type="entry name" value="CPCD_LIKE"/>
    <property type="match status" value="1"/>
</dbReference>
<dbReference type="PROSITE" id="PS51445">
    <property type="entry name" value="PBS_LINKER"/>
    <property type="match status" value="1"/>
</dbReference>
<protein>
    <recommendedName>
        <fullName>Phycobilisome 32.1 kDa linker polypeptide, phycocyanin-associated, rod</fullName>
    </recommendedName>
</protein>
<accession>P07123</accession>
<evidence type="ECO:0000255" key="1">
    <source>
        <dbReference type="PROSITE-ProRule" id="PRU00771"/>
    </source>
</evidence>
<evidence type="ECO:0000255" key="2">
    <source>
        <dbReference type="PROSITE-ProRule" id="PRU00775"/>
    </source>
</evidence>
<evidence type="ECO:0000269" key="3">
    <source>
    </source>
</evidence>
<evidence type="ECO:0000269" key="4">
    <source>
    </source>
</evidence>
<evidence type="ECO:0000269" key="5">
    <source>
    </source>
</evidence>
<evidence type="ECO:0000305" key="6"/>
<comment type="function">
    <text>Rod linker protein, associated with phycocyanin. Linker polypeptides determine the state of aggregation and the location of the disk-shaped phycobiliprotein units within the phycobilisome and modulate their spectroscopic properties in order to mediate a directed and optimal energy transfer.</text>
</comment>
<comment type="subunit">
    <text evidence="4 5">Associated with the phycobilisome, a hemidiscoidal structure that is composed of two distinct substructures: a core complex and a number of rods radiating from the core.</text>
</comment>
<comment type="subcellular location">
    <subcellularLocation>
        <location evidence="4">Cellular thylakoid membrane</location>
        <topology>Peripheral membrane protein</topology>
        <orientation>Cytoplasmic side</orientation>
    </subcellularLocation>
    <text evidence="4">This protein occurs in the rod, it is associated with phycocyanin.</text>
</comment>
<comment type="similarity">
    <text evidence="2">Belongs to the phycobilisome linker protein family.</text>
</comment>
<sequence length="286" mass="32209">MAITTAASRLGTEPFSDAPKVELRPKASREEVESVIRAVYRHVLGNDYILASERLVSAESLLRDGNLTVREFVRSVAKSELYKKKFFYNSFQTRLIELNYKHLLGRAPYDESEVVYHLDLYQNKGYDAEIDSYIDSWEYQSNFGDNVVPYYRGFETQVGQKTAGFNRIFRLYRGYANSDRAQVEGTKSRLARELASNKASTIVGPSGTNDSWGFRASADVAPKKNLGNAVGEGDRVYRLEVTGIRSPGYPSVRRSSTVFIVPYERLSDKIQQVHKQGGKIVSVTSA</sequence>
<feature type="initiator methionine" description="Removed" evidence="3 4">
    <location>
        <position position="1"/>
    </location>
</feature>
<feature type="chain" id="PRO_0000199219" description="Phycobilisome 32.1 kDa linker polypeptide, phycocyanin-associated, rod">
    <location>
        <begin position="2"/>
        <end position="286"/>
    </location>
</feature>
<feature type="domain" description="PBS-linker" evidence="2">
    <location>
        <begin position="2"/>
        <end position="180"/>
    </location>
</feature>
<feature type="domain" description="CpcD-like" evidence="1">
    <location>
        <begin position="234"/>
        <end position="286"/>
    </location>
</feature>
<feature type="sequence conflict" description="In Ref. 1; CAA28864 and 2; AAG09318." evidence="6" ref="1 2">
    <original>LARE</original>
    <variation>IGAGN</variation>
    <location>
        <begin position="190"/>
        <end position="193"/>
    </location>
</feature>